<feature type="chain" id="PRO_0000102472" description="Endoribonuclease YbeY">
    <location>
        <begin position="1"/>
        <end position="159"/>
    </location>
</feature>
<feature type="binding site" evidence="1">
    <location>
        <position position="125"/>
    </location>
    <ligand>
        <name>Zn(2+)</name>
        <dbReference type="ChEBI" id="CHEBI:29105"/>
        <note>catalytic</note>
    </ligand>
</feature>
<feature type="binding site" evidence="1">
    <location>
        <position position="129"/>
    </location>
    <ligand>
        <name>Zn(2+)</name>
        <dbReference type="ChEBI" id="CHEBI:29105"/>
        <note>catalytic</note>
    </ligand>
</feature>
<feature type="binding site" evidence="1">
    <location>
        <position position="135"/>
    </location>
    <ligand>
        <name>Zn(2+)</name>
        <dbReference type="ChEBI" id="CHEBI:29105"/>
        <note>catalytic</note>
    </ligand>
</feature>
<reference key="1">
    <citation type="journal article" date="2003" name="Proc. Natl. Acad. Sci. U.S.A.">
        <title>Complete genome sequence of Lactobacillus plantarum WCFS1.</title>
        <authorList>
            <person name="Kleerebezem M."/>
            <person name="Boekhorst J."/>
            <person name="van Kranenburg R."/>
            <person name="Molenaar D."/>
            <person name="Kuipers O.P."/>
            <person name="Leer R."/>
            <person name="Tarchini R."/>
            <person name="Peters S.A."/>
            <person name="Sandbrink H.M."/>
            <person name="Fiers M.W.E.J."/>
            <person name="Stiekema W."/>
            <person name="Klein Lankhorst R.M."/>
            <person name="Bron P.A."/>
            <person name="Hoffer S.M."/>
            <person name="Nierop Groot M.N."/>
            <person name="Kerkhoven R."/>
            <person name="De Vries M."/>
            <person name="Ursing B."/>
            <person name="De Vos W.M."/>
            <person name="Siezen R.J."/>
        </authorList>
    </citation>
    <scope>NUCLEOTIDE SEQUENCE [LARGE SCALE GENOMIC DNA]</scope>
    <source>
        <strain>ATCC BAA-793 / NCIMB 8826 / WCFS1</strain>
    </source>
</reference>
<reference key="2">
    <citation type="journal article" date="2012" name="J. Bacteriol.">
        <title>Complete resequencing and reannotation of the Lactobacillus plantarum WCFS1 genome.</title>
        <authorList>
            <person name="Siezen R.J."/>
            <person name="Francke C."/>
            <person name="Renckens B."/>
            <person name="Boekhorst J."/>
            <person name="Wels M."/>
            <person name="Kleerebezem M."/>
            <person name="van Hijum S.A."/>
        </authorList>
    </citation>
    <scope>NUCLEOTIDE SEQUENCE [LARGE SCALE GENOMIC DNA]</scope>
    <scope>GENOME REANNOTATION</scope>
    <source>
        <strain>ATCC BAA-793 / NCIMB 8826 / WCFS1</strain>
    </source>
</reference>
<evidence type="ECO:0000255" key="1">
    <source>
        <dbReference type="HAMAP-Rule" id="MF_00009"/>
    </source>
</evidence>
<keyword id="KW-0963">Cytoplasm</keyword>
<keyword id="KW-0255">Endonuclease</keyword>
<keyword id="KW-0378">Hydrolase</keyword>
<keyword id="KW-0479">Metal-binding</keyword>
<keyword id="KW-0540">Nuclease</keyword>
<keyword id="KW-1185">Reference proteome</keyword>
<keyword id="KW-0690">Ribosome biogenesis</keyword>
<keyword id="KW-0698">rRNA processing</keyword>
<keyword id="KW-0862">Zinc</keyword>
<organism>
    <name type="scientific">Lactiplantibacillus plantarum (strain ATCC BAA-793 / NCIMB 8826 / WCFS1)</name>
    <name type="common">Lactobacillus plantarum</name>
    <dbReference type="NCBI Taxonomy" id="220668"/>
    <lineage>
        <taxon>Bacteria</taxon>
        <taxon>Bacillati</taxon>
        <taxon>Bacillota</taxon>
        <taxon>Bacilli</taxon>
        <taxon>Lactobacillales</taxon>
        <taxon>Lactobacillaceae</taxon>
        <taxon>Lactiplantibacillus</taxon>
    </lineage>
</organism>
<proteinExistence type="inferred from homology"/>
<dbReference type="EC" id="3.1.-.-" evidence="1"/>
<dbReference type="EMBL" id="AL935263">
    <property type="protein sequence ID" value="CCC79223.1"/>
    <property type="molecule type" value="Genomic_DNA"/>
</dbReference>
<dbReference type="RefSeq" id="WP_003640681.1">
    <property type="nucleotide sequence ID" value="NC_004567.2"/>
</dbReference>
<dbReference type="RefSeq" id="YP_004889737.1">
    <property type="nucleotide sequence ID" value="NC_004567.2"/>
</dbReference>
<dbReference type="SMR" id="Q88VR8"/>
<dbReference type="STRING" id="220668.lp_1969"/>
<dbReference type="EnsemblBacteria" id="CCC79223">
    <property type="protein sequence ID" value="CCC79223"/>
    <property type="gene ID" value="lp_1969"/>
</dbReference>
<dbReference type="GeneID" id="77218318"/>
<dbReference type="KEGG" id="lpl:lp_1969"/>
<dbReference type="PATRIC" id="fig|220668.9.peg.1663"/>
<dbReference type="eggNOG" id="COG0319">
    <property type="taxonomic scope" value="Bacteria"/>
</dbReference>
<dbReference type="HOGENOM" id="CLU_106710_3_0_9"/>
<dbReference type="OrthoDB" id="9807740at2"/>
<dbReference type="PhylomeDB" id="Q88VR8"/>
<dbReference type="Proteomes" id="UP000000432">
    <property type="component" value="Chromosome"/>
</dbReference>
<dbReference type="GO" id="GO:0005737">
    <property type="term" value="C:cytoplasm"/>
    <property type="evidence" value="ECO:0007669"/>
    <property type="project" value="UniProtKB-SubCell"/>
</dbReference>
<dbReference type="GO" id="GO:0004222">
    <property type="term" value="F:metalloendopeptidase activity"/>
    <property type="evidence" value="ECO:0007669"/>
    <property type="project" value="InterPro"/>
</dbReference>
<dbReference type="GO" id="GO:0004521">
    <property type="term" value="F:RNA endonuclease activity"/>
    <property type="evidence" value="ECO:0007669"/>
    <property type="project" value="UniProtKB-UniRule"/>
</dbReference>
<dbReference type="GO" id="GO:0008270">
    <property type="term" value="F:zinc ion binding"/>
    <property type="evidence" value="ECO:0007669"/>
    <property type="project" value="UniProtKB-UniRule"/>
</dbReference>
<dbReference type="GO" id="GO:0006364">
    <property type="term" value="P:rRNA processing"/>
    <property type="evidence" value="ECO:0007669"/>
    <property type="project" value="UniProtKB-UniRule"/>
</dbReference>
<dbReference type="Gene3D" id="3.40.390.30">
    <property type="entry name" value="Metalloproteases ('zincins'), catalytic domain"/>
    <property type="match status" value="1"/>
</dbReference>
<dbReference type="HAMAP" id="MF_00009">
    <property type="entry name" value="Endoribonucl_YbeY"/>
    <property type="match status" value="1"/>
</dbReference>
<dbReference type="InterPro" id="IPR023091">
    <property type="entry name" value="MetalPrtase_cat_dom_sf_prd"/>
</dbReference>
<dbReference type="InterPro" id="IPR002036">
    <property type="entry name" value="YbeY"/>
</dbReference>
<dbReference type="InterPro" id="IPR020549">
    <property type="entry name" value="YbeY_CS"/>
</dbReference>
<dbReference type="NCBIfam" id="TIGR00043">
    <property type="entry name" value="rRNA maturation RNase YbeY"/>
    <property type="match status" value="1"/>
</dbReference>
<dbReference type="PANTHER" id="PTHR46986">
    <property type="entry name" value="ENDORIBONUCLEASE YBEY, CHLOROPLASTIC"/>
    <property type="match status" value="1"/>
</dbReference>
<dbReference type="PANTHER" id="PTHR46986:SF1">
    <property type="entry name" value="ENDORIBONUCLEASE YBEY, CHLOROPLASTIC"/>
    <property type="match status" value="1"/>
</dbReference>
<dbReference type="Pfam" id="PF02130">
    <property type="entry name" value="YbeY"/>
    <property type="match status" value="1"/>
</dbReference>
<dbReference type="SUPFAM" id="SSF55486">
    <property type="entry name" value="Metalloproteases ('zincins'), catalytic domain"/>
    <property type="match status" value="1"/>
</dbReference>
<dbReference type="PROSITE" id="PS01306">
    <property type="entry name" value="UPF0054"/>
    <property type="match status" value="1"/>
</dbReference>
<accession>Q88VR8</accession>
<accession>F9UPT4</accession>
<gene>
    <name evidence="1" type="primary">ybeY</name>
    <name type="ordered locus">lp_1969</name>
</gene>
<protein>
    <recommendedName>
        <fullName evidence="1">Endoribonuclease YbeY</fullName>
        <ecNumber evidence="1">3.1.-.-</ecNumber>
    </recommendedName>
</protein>
<comment type="function">
    <text evidence="1">Single strand-specific metallo-endoribonuclease involved in late-stage 70S ribosome quality control and in maturation of the 3' terminus of the 16S rRNA.</text>
</comment>
<comment type="cofactor">
    <cofactor evidence="1">
        <name>Zn(2+)</name>
        <dbReference type="ChEBI" id="CHEBI:29105"/>
    </cofactor>
    <text evidence="1">Binds 1 zinc ion.</text>
</comment>
<comment type="subcellular location">
    <subcellularLocation>
        <location evidence="1">Cytoplasm</location>
    </subcellularLocation>
</comment>
<comment type="similarity">
    <text evidence="1">Belongs to the endoribonuclease YbeY family.</text>
</comment>
<name>YBEY_LACPL</name>
<sequence>MDLELYDQTTTGAQPEQLQLIRDLIDLAGQTLKLRDDTEVSVTLMNNDAIQKINEQYRGVDRPTDVISFAMHDDDEDDLIVMDPEMAAEMPLNLGDIMISVDKVSEQAAFLNHSEARELGYLVVHGFLHLNGYDHLQPADETEMFTLQRQILDAYGLEK</sequence>